<dbReference type="EMBL" id="CU928162">
    <property type="protein sequence ID" value="CAR09447.2"/>
    <property type="molecule type" value="Genomic_DNA"/>
</dbReference>
<dbReference type="RefSeq" id="WP_000082183.1">
    <property type="nucleotide sequence ID" value="NC_011745.1"/>
</dbReference>
<dbReference type="SMR" id="B7MZD0"/>
<dbReference type="KEGG" id="ecq:ECED1_3287"/>
<dbReference type="HOGENOM" id="CLU_086669_0_0_6"/>
<dbReference type="Proteomes" id="UP000000748">
    <property type="component" value="Chromosome"/>
</dbReference>
<dbReference type="GO" id="GO:0005737">
    <property type="term" value="C:cytoplasm"/>
    <property type="evidence" value="ECO:0007669"/>
    <property type="project" value="UniProtKB-SubCell"/>
</dbReference>
<dbReference type="GO" id="GO:0003677">
    <property type="term" value="F:DNA binding"/>
    <property type="evidence" value="ECO:0007669"/>
    <property type="project" value="InterPro"/>
</dbReference>
<dbReference type="GO" id="GO:0004519">
    <property type="term" value="F:endonuclease activity"/>
    <property type="evidence" value="ECO:0007669"/>
    <property type="project" value="UniProtKB-UniRule"/>
</dbReference>
<dbReference type="GO" id="GO:0006304">
    <property type="term" value="P:DNA modification"/>
    <property type="evidence" value="ECO:0007669"/>
    <property type="project" value="InterPro"/>
</dbReference>
<dbReference type="GO" id="GO:0006298">
    <property type="term" value="P:mismatch repair"/>
    <property type="evidence" value="ECO:0007669"/>
    <property type="project" value="UniProtKB-UniRule"/>
</dbReference>
<dbReference type="CDD" id="cd00583">
    <property type="entry name" value="MutH-like"/>
    <property type="match status" value="1"/>
</dbReference>
<dbReference type="FunFam" id="3.40.600.10:FF:000001">
    <property type="entry name" value="DNA mismatch repair protein MutH"/>
    <property type="match status" value="1"/>
</dbReference>
<dbReference type="Gene3D" id="3.40.600.10">
    <property type="entry name" value="DNA mismatch repair MutH/Restriction endonuclease, type II"/>
    <property type="match status" value="1"/>
</dbReference>
<dbReference type="HAMAP" id="MF_00759">
    <property type="entry name" value="MutH"/>
    <property type="match status" value="1"/>
</dbReference>
<dbReference type="InterPro" id="IPR004230">
    <property type="entry name" value="DNA_mismatch_repair_MutH"/>
</dbReference>
<dbReference type="InterPro" id="IPR011337">
    <property type="entry name" value="DNA_rep_MutH/RE_typeII_Sau3AI"/>
</dbReference>
<dbReference type="InterPro" id="IPR037057">
    <property type="entry name" value="DNA_rep_MutH/T2_RE_sf"/>
</dbReference>
<dbReference type="InterPro" id="IPR011335">
    <property type="entry name" value="Restrct_endonuc-II-like"/>
</dbReference>
<dbReference type="NCBIfam" id="TIGR02248">
    <property type="entry name" value="mutH_TIGR"/>
    <property type="match status" value="1"/>
</dbReference>
<dbReference type="NCBIfam" id="NF003458">
    <property type="entry name" value="PRK05070.1"/>
    <property type="match status" value="1"/>
</dbReference>
<dbReference type="Pfam" id="PF02976">
    <property type="entry name" value="MutH"/>
    <property type="match status" value="1"/>
</dbReference>
<dbReference type="SMART" id="SM00927">
    <property type="entry name" value="MutH"/>
    <property type="match status" value="1"/>
</dbReference>
<dbReference type="SUPFAM" id="SSF52980">
    <property type="entry name" value="Restriction endonuclease-like"/>
    <property type="match status" value="1"/>
</dbReference>
<accession>B7MZD0</accession>
<gene>
    <name evidence="1" type="primary">mutH</name>
    <name type="ordered locus">ECED1_3287</name>
</gene>
<protein>
    <recommendedName>
        <fullName evidence="1">DNA mismatch repair protein MutH</fullName>
    </recommendedName>
    <alternativeName>
        <fullName evidence="1">Methyl-directed mismatch repair protein</fullName>
    </alternativeName>
</protein>
<sequence>MSQPRPLLSPPETEEQLLAQAQQLSGYTLGELAALAGLVTPENLKRDKGWIGVLLEIWLGASAGSKPEQDFAALGVELKTIPVDSLGRPLETTFVCVAPLTGNSGVTWETSHVRHKLKRVLWIPVEGERSIPLAKRRVGSPLLWSPNEEEDRQLREDWEELMDMIVLGQIERITARHGEYLQIRPKAANAKALTEAIGARGERILTLPRGFYLKKNFTSALLARHFLIQ</sequence>
<keyword id="KW-0963">Cytoplasm</keyword>
<keyword id="KW-0227">DNA damage</keyword>
<keyword id="KW-0234">DNA repair</keyword>
<keyword id="KW-0255">Endonuclease</keyword>
<keyword id="KW-0378">Hydrolase</keyword>
<keyword id="KW-0540">Nuclease</keyword>
<feature type="chain" id="PRO_1000148399" description="DNA mismatch repair protein MutH">
    <location>
        <begin position="1"/>
        <end position="229"/>
    </location>
</feature>
<proteinExistence type="inferred from homology"/>
<name>MUTH_ECO81</name>
<evidence type="ECO:0000255" key="1">
    <source>
        <dbReference type="HAMAP-Rule" id="MF_00759"/>
    </source>
</evidence>
<comment type="function">
    <text evidence="1">Sequence-specific endonuclease that cleaves unmethylated GATC sequences. It is involved in DNA mismatch repair.</text>
</comment>
<comment type="subcellular location">
    <subcellularLocation>
        <location evidence="1">Cytoplasm</location>
    </subcellularLocation>
</comment>
<comment type="similarity">
    <text evidence="1">Belongs to the MutH family.</text>
</comment>
<organism>
    <name type="scientific">Escherichia coli O81 (strain ED1a)</name>
    <dbReference type="NCBI Taxonomy" id="585397"/>
    <lineage>
        <taxon>Bacteria</taxon>
        <taxon>Pseudomonadati</taxon>
        <taxon>Pseudomonadota</taxon>
        <taxon>Gammaproteobacteria</taxon>
        <taxon>Enterobacterales</taxon>
        <taxon>Enterobacteriaceae</taxon>
        <taxon>Escherichia</taxon>
    </lineage>
</organism>
<reference key="1">
    <citation type="journal article" date="2009" name="PLoS Genet.">
        <title>Organised genome dynamics in the Escherichia coli species results in highly diverse adaptive paths.</title>
        <authorList>
            <person name="Touchon M."/>
            <person name="Hoede C."/>
            <person name="Tenaillon O."/>
            <person name="Barbe V."/>
            <person name="Baeriswyl S."/>
            <person name="Bidet P."/>
            <person name="Bingen E."/>
            <person name="Bonacorsi S."/>
            <person name="Bouchier C."/>
            <person name="Bouvet O."/>
            <person name="Calteau A."/>
            <person name="Chiapello H."/>
            <person name="Clermont O."/>
            <person name="Cruveiller S."/>
            <person name="Danchin A."/>
            <person name="Diard M."/>
            <person name="Dossat C."/>
            <person name="Karoui M.E."/>
            <person name="Frapy E."/>
            <person name="Garry L."/>
            <person name="Ghigo J.M."/>
            <person name="Gilles A.M."/>
            <person name="Johnson J."/>
            <person name="Le Bouguenec C."/>
            <person name="Lescat M."/>
            <person name="Mangenot S."/>
            <person name="Martinez-Jehanne V."/>
            <person name="Matic I."/>
            <person name="Nassif X."/>
            <person name="Oztas S."/>
            <person name="Petit M.A."/>
            <person name="Pichon C."/>
            <person name="Rouy Z."/>
            <person name="Ruf C.S."/>
            <person name="Schneider D."/>
            <person name="Tourret J."/>
            <person name="Vacherie B."/>
            <person name="Vallenet D."/>
            <person name="Medigue C."/>
            <person name="Rocha E.P.C."/>
            <person name="Denamur E."/>
        </authorList>
    </citation>
    <scope>NUCLEOTIDE SEQUENCE [LARGE SCALE GENOMIC DNA]</scope>
    <source>
        <strain>ED1a</strain>
    </source>
</reference>